<feature type="initiator methionine" description="Removed" evidence="3 9">
    <location>
        <position position="1"/>
    </location>
</feature>
<feature type="chain" id="PRO_0000055101" description="ATP-dependent RNA helicase DeaD">
    <location>
        <begin position="2"/>
        <end position="629"/>
    </location>
</feature>
<feature type="domain" description="Helicase ATP-binding" evidence="1">
    <location>
        <begin position="37"/>
        <end position="208"/>
    </location>
</feature>
<feature type="domain" description="Helicase C-terminal" evidence="1">
    <location>
        <begin position="232"/>
        <end position="379"/>
    </location>
</feature>
<feature type="region of interest" description="Disordered" evidence="2">
    <location>
        <begin position="438"/>
        <end position="481"/>
    </location>
</feature>
<feature type="region of interest" description="Disordered" evidence="2">
    <location>
        <begin position="560"/>
        <end position="629"/>
    </location>
</feature>
<feature type="short sequence motif" description="Q motif">
    <location>
        <begin position="6"/>
        <end position="34"/>
    </location>
</feature>
<feature type="short sequence motif" description="DEAD box">
    <location>
        <begin position="156"/>
        <end position="159"/>
    </location>
</feature>
<feature type="compositionally biased region" description="Basic and acidic residues" evidence="2">
    <location>
        <begin position="446"/>
        <end position="481"/>
    </location>
</feature>
<feature type="compositionally biased region" description="Basic and acidic residues" evidence="2">
    <location>
        <begin position="568"/>
        <end position="629"/>
    </location>
</feature>
<feature type="binding site" evidence="1">
    <location>
        <begin position="50"/>
        <end position="57"/>
    </location>
    <ligand>
        <name>ATP</name>
        <dbReference type="ChEBI" id="CHEBI:30616"/>
    </ligand>
</feature>
<feature type="mutagenesis site" description="Abolishes ATPase activity, drastically reduces helicase activity. In vivo acts as a dominant negative mutation in the presence of the wild-type protein at low temperature." evidence="7">
    <original>E</original>
    <variation>Q</variation>
    <location>
        <position position="157"/>
    </location>
</feature>
<feature type="sequence conflict" description="In Ref. 1; AAA23674." evidence="13" ref="1">
    <original>A</original>
    <variation>G</variation>
    <location>
        <position position="444"/>
    </location>
</feature>
<feature type="helix" evidence="18">
    <location>
        <begin position="9"/>
        <end position="11"/>
    </location>
</feature>
<feature type="helix" evidence="18">
    <location>
        <begin position="15"/>
        <end position="24"/>
    </location>
</feature>
<feature type="helix" evidence="18">
    <location>
        <begin position="31"/>
        <end position="41"/>
    </location>
</feature>
<feature type="strand" evidence="18">
    <location>
        <begin position="46"/>
        <end position="48"/>
    </location>
</feature>
<feature type="helix" evidence="18">
    <location>
        <begin position="56"/>
        <end position="66"/>
    </location>
</feature>
<feature type="strand" evidence="18">
    <location>
        <begin position="77"/>
        <end position="80"/>
    </location>
</feature>
<feature type="helix" evidence="18">
    <location>
        <begin position="84"/>
        <end position="97"/>
    </location>
</feature>
<feature type="turn" evidence="18">
    <location>
        <begin position="98"/>
        <end position="100"/>
    </location>
</feature>
<feature type="strand" evidence="18">
    <location>
        <begin position="106"/>
        <end position="109"/>
    </location>
</feature>
<feature type="helix" evidence="18">
    <location>
        <begin position="118"/>
        <end position="123"/>
    </location>
</feature>
<feature type="strand" evidence="18">
    <location>
        <begin position="127"/>
        <end position="131"/>
    </location>
</feature>
<feature type="helix" evidence="18">
    <location>
        <begin position="133"/>
        <end position="142"/>
    </location>
</feature>
<feature type="strand" evidence="18">
    <location>
        <begin position="143"/>
        <end position="145"/>
    </location>
</feature>
<feature type="strand" evidence="18">
    <location>
        <begin position="152"/>
        <end position="157"/>
    </location>
</feature>
<feature type="helix" evidence="18">
    <location>
        <begin position="158"/>
        <end position="163"/>
    </location>
</feature>
<feature type="helix" evidence="18">
    <location>
        <begin position="167"/>
        <end position="175"/>
    </location>
</feature>
<feature type="strand" evidence="18">
    <location>
        <begin position="182"/>
        <end position="186"/>
    </location>
</feature>
<feature type="helix" evidence="18">
    <location>
        <begin position="192"/>
        <end position="201"/>
    </location>
</feature>
<feature type="strand" evidence="18">
    <location>
        <begin position="206"/>
        <end position="208"/>
    </location>
</feature>
<feature type="strand" evidence="17">
    <location>
        <begin position="221"/>
        <end position="226"/>
    </location>
</feature>
<feature type="helix" evidence="17">
    <location>
        <begin position="232"/>
        <end position="242"/>
    </location>
</feature>
<feature type="strand" evidence="17">
    <location>
        <begin position="246"/>
        <end position="251"/>
    </location>
</feature>
<feature type="helix" evidence="17">
    <location>
        <begin position="255"/>
        <end position="266"/>
    </location>
</feature>
<feature type="turn" evidence="17">
    <location>
        <begin position="267"/>
        <end position="269"/>
    </location>
</feature>
<feature type="strand" evidence="17">
    <location>
        <begin position="272"/>
        <end position="275"/>
    </location>
</feature>
<feature type="helix" evidence="17">
    <location>
        <begin position="282"/>
        <end position="292"/>
    </location>
</feature>
<feature type="strand" evidence="17">
    <location>
        <begin position="298"/>
        <end position="301"/>
    </location>
</feature>
<feature type="helix" evidence="17">
    <location>
        <begin position="304"/>
        <end position="306"/>
    </location>
</feature>
<feature type="strand" evidence="17">
    <location>
        <begin position="314"/>
        <end position="321"/>
    </location>
</feature>
<feature type="helix" evidence="17">
    <location>
        <begin position="326"/>
        <end position="333"/>
    </location>
</feature>
<feature type="helix" evidence="17">
    <location>
        <begin position="338"/>
        <end position="340"/>
    </location>
</feature>
<feature type="strand" evidence="17">
    <location>
        <begin position="344"/>
        <end position="349"/>
    </location>
</feature>
<feature type="helix" evidence="17">
    <location>
        <begin position="351"/>
        <end position="353"/>
    </location>
</feature>
<feature type="helix" evidence="17">
    <location>
        <begin position="354"/>
        <end position="363"/>
    </location>
</feature>
<feature type="helix" evidence="17">
    <location>
        <begin position="376"/>
        <end position="395"/>
    </location>
</feature>
<feature type="helix" evidence="17">
    <location>
        <begin position="400"/>
        <end position="406"/>
    </location>
</feature>
<feature type="helix" evidence="17">
    <location>
        <begin position="407"/>
        <end position="409"/>
    </location>
</feature>
<feature type="strand" evidence="17">
    <location>
        <begin position="414"/>
        <end position="416"/>
    </location>
</feature>
<feature type="helix" evidence="17">
    <location>
        <begin position="421"/>
        <end position="432"/>
    </location>
</feature>
<feature type="strand" evidence="16">
    <location>
        <begin position="489"/>
        <end position="492"/>
    </location>
</feature>
<feature type="turn" evidence="16">
    <location>
        <begin position="495"/>
        <end position="498"/>
    </location>
</feature>
<feature type="helix" evidence="16">
    <location>
        <begin position="501"/>
        <end position="511"/>
    </location>
</feature>
<feature type="turn" evidence="16">
    <location>
        <begin position="516"/>
        <end position="518"/>
    </location>
</feature>
<feature type="strand" evidence="16">
    <location>
        <begin position="529"/>
        <end position="531"/>
    </location>
</feature>
<feature type="helix" evidence="16">
    <location>
        <begin position="541"/>
        <end position="544"/>
    </location>
</feature>
<feature type="turn" evidence="16">
    <location>
        <begin position="551"/>
        <end position="554"/>
    </location>
</feature>
<gene>
    <name evidence="1 11" type="primary">deaD</name>
    <name evidence="1 12" type="synonym">csdA</name>
    <name type="synonym">mssB</name>
    <name type="synonym">rhlD</name>
    <name type="ordered locus">b3162</name>
    <name type="ordered locus">JW5531</name>
</gene>
<reference key="1">
    <citation type="journal article" date="1991" name="J. Bacteriol.">
        <title>deaD, a new Escherichia coli gene encoding a presumed ATP-dependent RNA helicase, can suppress a mutation in rpsB, the gene encoding ribosomal protein S2.</title>
        <authorList>
            <person name="Toone W.M."/>
            <person name="Rudd K.E."/>
            <person name="Friesen J.D."/>
        </authorList>
    </citation>
    <scope>NUCLEOTIDE SEQUENCE [GENOMIC DNA]</scope>
    <scope>SUPPRESSION OF RPSB MUTATION</scope>
    <scope>GENE NAME</scope>
</reference>
<reference key="2">
    <citation type="journal article" date="1997" name="Science">
        <title>The complete genome sequence of Escherichia coli K-12.</title>
        <authorList>
            <person name="Blattner F.R."/>
            <person name="Plunkett G. III"/>
            <person name="Bloch C.A."/>
            <person name="Perna N.T."/>
            <person name="Burland V."/>
            <person name="Riley M."/>
            <person name="Collado-Vides J."/>
            <person name="Glasner J.D."/>
            <person name="Rode C.K."/>
            <person name="Mayhew G.F."/>
            <person name="Gregor J."/>
            <person name="Davis N.W."/>
            <person name="Kirkpatrick H.A."/>
            <person name="Goeden M.A."/>
            <person name="Rose D.J."/>
            <person name="Mau B."/>
            <person name="Shao Y."/>
        </authorList>
    </citation>
    <scope>NUCLEOTIDE SEQUENCE [LARGE SCALE GENOMIC DNA]</scope>
    <source>
        <strain>K12 / MG1655 / ATCC 47076</strain>
    </source>
</reference>
<reference key="3">
    <citation type="journal article" date="2006" name="Mol. Syst. Biol.">
        <title>Highly accurate genome sequences of Escherichia coli K-12 strains MG1655 and W3110.</title>
        <authorList>
            <person name="Hayashi K."/>
            <person name="Morooka N."/>
            <person name="Yamamoto Y."/>
            <person name="Fujita K."/>
            <person name="Isono K."/>
            <person name="Choi S."/>
            <person name="Ohtsubo E."/>
            <person name="Baba T."/>
            <person name="Wanner B.L."/>
            <person name="Mori H."/>
            <person name="Horiuchi T."/>
        </authorList>
    </citation>
    <scope>NUCLEOTIDE SEQUENCE [LARGE SCALE GENOMIC DNA]</scope>
    <source>
        <strain>K12 / W3110 / ATCC 27325 / DSM 5911</strain>
    </source>
</reference>
<reference key="4">
    <citation type="journal article" date="1996" name="Proc. Natl. Acad. Sci. U.S.A.">
        <title>Cold shock induces a major ribosomal-associated protein that unwinds double-stranded RNA in Escherichia coli.</title>
        <authorList>
            <person name="Jones P.G."/>
            <person name="Mitta M."/>
            <person name="Kim Y."/>
            <person name="Jiang W."/>
            <person name="Inouye M."/>
        </authorList>
    </citation>
    <scope>PROTEIN SEQUENCE OF 2-21</scope>
    <scope>FUNCTION IN HELIX-DESTABILIZING</scope>
    <scope>INTERACTION WITH RIBOSOME</scope>
    <scope>SUBCELLULAR LOCATION</scope>
    <scope>INDUCTION</scope>
    <scope>DISRUPTION PHENOTYPE</scope>
</reference>
<reference key="5">
    <citation type="journal article" date="1999" name="Int. J. Biochem. Cell Biol.">
        <title>Molecular characterization of a prokaryotic translation factor homologous to the eukaryotic initiation factor eIF4A.</title>
        <authorList>
            <person name="Lu J."/>
            <person name="Aoki H."/>
            <person name="Ganoza M.C."/>
        </authorList>
    </citation>
    <scope>PROTEIN SEQUENCE OF 2-16</scope>
    <scope>FUNCTION AS A TRANSLATION FACTOR</scope>
</reference>
<reference key="6">
    <citation type="journal article" date="1994" name="J. Biochem.">
        <title>Nucleotide sequence and expression in Escherichia coli of the Klebsiella pneumoniae deaD gene.</title>
        <authorList>
            <person name="Peng H.L."/>
            <person name="Hsieh M.J."/>
            <person name="Zao C.L."/>
            <person name="Chang H.-Y."/>
        </authorList>
    </citation>
    <scope>NUCLEOTIDE SEQUENCE [GENOMIC DNA] OF 519-629</scope>
    <source>
        <strain>K12 / JM101 / ATCC 33876 / DSM 3948 / NCIMB 11926</strain>
    </source>
</reference>
<reference key="7">
    <citation type="journal article" date="1994" name="Mol. Gen. Genet.">
        <title>Multicopy suppressors, mssA and mssB, of an smbA mutation of Escherichia coli.</title>
        <authorList>
            <person name="Yamanaka K."/>
            <person name="Ogura T."/>
            <person name="Koonin E.V."/>
            <person name="Niki H."/>
            <person name="Hiraga S."/>
        </authorList>
    </citation>
    <scope>SUPPRESSION OF PYRH MUTATION</scope>
</reference>
<reference key="8">
    <citation type="journal article" date="1996" name="Mol. Microbiol.">
        <title>RbfA, a 30S ribosomal binding factor, is a cold-shock protein whose absence triggers the cold-shock response.</title>
        <authorList>
            <person name="Jones P.G."/>
            <person name="Inouye M."/>
        </authorList>
    </citation>
    <scope>INDUCTION BY COLD-SHOCK</scope>
    <source>
        <strain>CSH142</strain>
    </source>
</reference>
<reference key="9">
    <citation type="journal article" date="2004" name="Biochemistry">
        <title>Studies on three E. coli DEAD-box helicases point to an unwinding mechanism different from that of model DNA helicases.</title>
        <authorList>
            <person name="Bizebard T."/>
            <person name="Ferlenghi I."/>
            <person name="Iost I."/>
            <person name="Dreyfus M."/>
        </authorList>
    </citation>
    <scope>FUNCTION</scope>
    <scope>CATALYTIC ACTIVITY</scope>
</reference>
<reference key="10">
    <citation type="journal article" date="2004" name="Mol. Microbiol.">
        <title>Physical and functional interactions among RNase E, polynucleotide phosphorylase and the cold-shock protein, CsdA: evidence for a 'cold shock degradosome'.</title>
        <authorList>
            <person name="Prud'homme-Genereux A."/>
            <person name="Beran R.K."/>
            <person name="Iost I."/>
            <person name="Ramey C.S."/>
            <person name="Mackie G.A."/>
            <person name="Simons R.W."/>
        </authorList>
    </citation>
    <scope>FUNCTION IN MRNA DECAY</scope>
    <scope>INTERACTION WITH RNASE E</scope>
    <source>
        <strain>CF881</strain>
    </source>
</reference>
<reference key="11">
    <citation type="journal article" date="2004" name="Nucleic Acids Res.">
        <title>CsdA, a cold-shock RNA helicase from Escherichia coli, is involved in the biogenesis of 50S ribosomal subunit.</title>
        <authorList>
            <person name="Charollais J."/>
            <person name="Dreyfus M."/>
            <person name="Iost I."/>
        </authorList>
    </citation>
    <scope>FUNCTION IN 50S RIBOSOME BIOGENESIS</scope>
    <scope>INTERACTION WITH 50S SUBUNIT</scope>
    <scope>DISRUPTION PHENOTYPE</scope>
    <source>
        <strain>K12 / W3110 / ATCC 27325 / DSM 5911</strain>
    </source>
</reference>
<reference key="12">
    <citation type="journal article" date="2007" name="J. Bacteriol.">
        <title>Mutational analysis of the Escherichia coli DEAD box protein CsdA.</title>
        <authorList>
            <person name="Turner A.-M.W."/>
            <person name="Love C.F."/>
            <person name="Alexander R.W."/>
            <person name="Jones P.G."/>
        </authorList>
    </citation>
    <scope>FUNCTION</scope>
    <scope>CATALYTIC ACTIVITY</scope>
    <scope>MUTAGENESIS OF GLU-157</scope>
</reference>
<reference key="13">
    <citation type="journal article" date="2015" name="J. Bacteriol.">
        <title>Efficient assembly of ribosomes is inhibited by deletion of bipA in Escherichia coli.</title>
        <authorList>
            <person name="Choudhury P."/>
            <person name="Flower A.M."/>
        </authorList>
    </citation>
    <scope>DISRUPTION PHENOTYPE</scope>
    <source>
        <strain>K12 / MG1655 / ATCC 47076</strain>
    </source>
</reference>
<name>DEAD_ECOLI</name>
<keyword id="KW-0002">3D-structure</keyword>
<keyword id="KW-0067">ATP-binding</keyword>
<keyword id="KW-0963">Cytoplasm</keyword>
<keyword id="KW-0903">Direct protein sequencing</keyword>
<keyword id="KW-0347">Helicase</keyword>
<keyword id="KW-0378">Hydrolase</keyword>
<keyword id="KW-0547">Nucleotide-binding</keyword>
<keyword id="KW-1185">Reference proteome</keyword>
<keyword id="KW-0694">RNA-binding</keyword>
<keyword id="KW-0346">Stress response</keyword>
<proteinExistence type="evidence at protein level"/>
<evidence type="ECO:0000255" key="1">
    <source>
        <dbReference type="HAMAP-Rule" id="MF_00964"/>
    </source>
</evidence>
<evidence type="ECO:0000256" key="2">
    <source>
        <dbReference type="SAM" id="MobiDB-lite"/>
    </source>
</evidence>
<evidence type="ECO:0000269" key="3">
    <source>
    </source>
</evidence>
<evidence type="ECO:0000269" key="4">
    <source>
    </source>
</evidence>
<evidence type="ECO:0000269" key="5">
    <source>
    </source>
</evidence>
<evidence type="ECO:0000269" key="6">
    <source>
    </source>
</evidence>
<evidence type="ECO:0000269" key="7">
    <source>
    </source>
</evidence>
<evidence type="ECO:0000269" key="8">
    <source>
    </source>
</evidence>
<evidence type="ECO:0000269" key="9">
    <source>
    </source>
</evidence>
<evidence type="ECO:0000269" key="10">
    <source>
    </source>
</evidence>
<evidence type="ECO:0000303" key="11">
    <source>
    </source>
</evidence>
<evidence type="ECO:0000303" key="12">
    <source>
    </source>
</evidence>
<evidence type="ECO:0000305" key="13"/>
<evidence type="ECO:0000305" key="14">
    <source>
    </source>
</evidence>
<evidence type="ECO:0000305" key="15">
    <source>
    </source>
</evidence>
<evidence type="ECO:0007829" key="16">
    <source>
        <dbReference type="PDB" id="5B88"/>
    </source>
</evidence>
<evidence type="ECO:0007829" key="17">
    <source>
        <dbReference type="PDB" id="5GI4"/>
    </source>
</evidence>
<evidence type="ECO:0007829" key="18">
    <source>
        <dbReference type="PDB" id="5GJU"/>
    </source>
</evidence>
<organism>
    <name type="scientific">Escherichia coli (strain K12)</name>
    <dbReference type="NCBI Taxonomy" id="83333"/>
    <lineage>
        <taxon>Bacteria</taxon>
        <taxon>Pseudomonadati</taxon>
        <taxon>Pseudomonadota</taxon>
        <taxon>Gammaproteobacteria</taxon>
        <taxon>Enterobacterales</taxon>
        <taxon>Enterobacteriaceae</taxon>
        <taxon>Escherichia</taxon>
    </lineage>
</organism>
<accession>P0A9P6</accession>
<accession>P23304</accession>
<accession>Q2M948</accession>
<accession>Q8FD90</accession>
<sequence length="629" mass="70546">MAEFETTFADLGLKAPILEALNDLGYEKPSPIQAECIPHLLNGRDVLGMAQTGSGKTAAFSLPLLQNLDPELKAPQILVLAPTRELAVQVAEAMTDFSKHMRGVNVVALYGGQRYDVQLRALRQGPQIVVGTPGRLLDHLKRGTLDLSKLSGLVLDEADEMLRMGFIEDVETIMAQIPEGHQTALFSATMPEAIRRITRRFMKEPQEVRIQSSVTTRPDISQSYWTVWGMRKNEALVRFLEAEDFDAAIIFVRTKNATLEVAEALERNGYNSAALNGDMNQALREQTLERLKDGRLDILIATDVAARGLDVERISLVVNYDIPMDSESYVHRIGRTGRAGRAGRALLFVENRERRLLRNIERTMKLTIPEVELPNAELLGKRRLEKFAAKVQQQLESSDLDQYRALLSKIQPTAEGEELDLETLAAALLKMAQGERTLIVPPDAPMRPKREFRDRDDRGPRDRNDRGPRGDREDRPRRERRDVGDMQLYRIEVGRDDGVEVRHIVGAIANEGDISSRYIGNIKLFASHSTIELPKGMPGEVLQHFTRTRILNKPMNMQLLGDAQPHTGGERRGGGRGFGGERREGGRNFSGERREGGRGDGRRFSGERREGRAPRRDDSTGRRRFGGDA</sequence>
<protein>
    <recommendedName>
        <fullName evidence="1">ATP-dependent RNA helicase DeaD</fullName>
        <ecNumber evidence="1">3.6.4.13</ecNumber>
    </recommendedName>
    <alternativeName>
        <fullName evidence="1 12">Cold-shock DEAD box protein A</fullName>
    </alternativeName>
    <alternativeName>
        <fullName>Translation factor W2</fullName>
    </alternativeName>
</protein>
<comment type="function">
    <text evidence="1 3 4 5 6 7 9">DEAD-box RNA helicase involved in various cellular processes at low temperature, including ribosome biogenesis, mRNA degradation and translation initiation. Exhibits RNA-stimulated ATP hydrolysis and RNA unwinding activity at low temperature. Involved in 50S ribosomal subunit assembly, acting after SrmB, and could also play a role in the biogenesis of the 30S ribosomal subunit. In addition, is involved in mRNA decay, via formation of a cold-shock degradosome with RNase E. Also stimulates translation of some mRNAs, probably at the level of initiation.</text>
</comment>
<comment type="catalytic activity">
    <reaction evidence="1 5 7">
        <text>ATP + H2O = ADP + phosphate + H(+)</text>
        <dbReference type="Rhea" id="RHEA:13065"/>
        <dbReference type="ChEBI" id="CHEBI:15377"/>
        <dbReference type="ChEBI" id="CHEBI:15378"/>
        <dbReference type="ChEBI" id="CHEBI:30616"/>
        <dbReference type="ChEBI" id="CHEBI:43474"/>
        <dbReference type="ChEBI" id="CHEBI:456216"/>
        <dbReference type="EC" id="3.6.4.13"/>
    </reaction>
</comment>
<comment type="subunit">
    <text evidence="4 6 9">Interacts with the 50S ribosomal subunit upon shifting to 15 degrees Celsius. Also found associated with the RNA degradosome at 15 degrees Celsius; binds RNase E (rne).</text>
</comment>
<comment type="subcellular location">
    <subcellularLocation>
        <location evidence="1 9">Cytoplasm</location>
    </subcellularLocation>
</comment>
<comment type="induction">
    <text evidence="9 10">In response to low temperature (PubMed:8552679). Induced by cold shock (42 to 15 degrees Celsius) (at protein level) (PubMed:8898389).</text>
</comment>
<comment type="disruption phenotype">
    <text evidence="4 8 9">Cells lacking this gene grow very poorly at 15-20 degrees Celsius, and accumulate an abnormal large ribosomal subunit and precursor-23S rRNA (PubMed:15148362, PubMed:25777676, PubMed:8552679). A double bipA-deaD deletion has a more severe growth and ribosome phenotype than either single deletion, but the same level of pre-23S rRNA as the single deaD deletion (PubMed:25777676).</text>
</comment>
<comment type="miscellaneous">
    <text evidence="14 15">When overexpressed suppresses cold-sensitive mutants of rpsB (ribosomal protein S2) (PubMed:2045359) and pyrH/smbA2 (uridylate kinase) (PubMed:8190075).</text>
</comment>
<comment type="similarity">
    <text evidence="1">Belongs to the DEAD box helicase family. DeaD/CsdA subfamily.</text>
</comment>
<comment type="caution">
    <text evidence="13">It is unclear whether it requires ATP: according to PubMed:8552679 and PubMed:10216955, it does not require ATP, while according to PubMed:15196029, PubMed:15554978 and PubMed:17259309, it requires ATP.</text>
</comment>
<comment type="sequence caution" evidence="13">
    <conflict type="erroneous initiation">
        <sequence resource="EMBL-CDS" id="AAA23674"/>
    </conflict>
    <text>Extended N-terminus.</text>
</comment>
<comment type="sequence caution" evidence="13">
    <conflict type="frameshift">
        <sequence resource="EMBL-CDS" id="AAA23674"/>
    </conflict>
</comment>
<comment type="sequence caution" evidence="13">
    <conflict type="erroneous initiation">
        <sequence resource="EMBL-CDS" id="AAA57965"/>
    </conflict>
    <text>Extended N-terminus.</text>
</comment>
<dbReference type="EC" id="3.6.4.13" evidence="1"/>
<dbReference type="EMBL" id="M63288">
    <property type="protein sequence ID" value="AAA23674.1"/>
    <property type="status" value="ALT_SEQ"/>
    <property type="molecule type" value="Genomic_DNA"/>
</dbReference>
<dbReference type="EMBL" id="U18997">
    <property type="protein sequence ID" value="AAA57965.1"/>
    <property type="status" value="ALT_INIT"/>
    <property type="molecule type" value="Genomic_DNA"/>
</dbReference>
<dbReference type="EMBL" id="U00096">
    <property type="protein sequence ID" value="AAC76196.2"/>
    <property type="molecule type" value="Genomic_DNA"/>
</dbReference>
<dbReference type="EMBL" id="AP009048">
    <property type="protein sequence ID" value="BAE77208.1"/>
    <property type="molecule type" value="Genomic_DNA"/>
</dbReference>
<dbReference type="EMBL" id="U03750">
    <property type="protein sequence ID" value="AAA03626.1"/>
    <property type="molecule type" value="Genomic_DNA"/>
</dbReference>
<dbReference type="PIR" id="F65106">
    <property type="entry name" value="F65106"/>
</dbReference>
<dbReference type="RefSeq" id="NP_417631.2">
    <property type="nucleotide sequence ID" value="NC_000913.3"/>
</dbReference>
<dbReference type="RefSeq" id="WP_001295553.1">
    <property type="nucleotide sequence ID" value="NZ_STEB01000012.1"/>
</dbReference>
<dbReference type="PDB" id="5B88">
    <property type="method" value="NMR"/>
    <property type="chains" value="A=482-564"/>
</dbReference>
<dbReference type="PDB" id="5GI4">
    <property type="method" value="X-ray"/>
    <property type="resolution" value="2.24 A"/>
    <property type="chains" value="A/B=218-445"/>
</dbReference>
<dbReference type="PDB" id="5GJU">
    <property type="method" value="X-ray"/>
    <property type="resolution" value="1.60 A"/>
    <property type="chains" value="A=6-210"/>
</dbReference>
<dbReference type="PDBsum" id="5B88"/>
<dbReference type="PDBsum" id="5GI4"/>
<dbReference type="PDBsum" id="5GJU"/>
<dbReference type="SMR" id="P0A9P6"/>
<dbReference type="BioGRID" id="4262429">
    <property type="interactions" value="188"/>
</dbReference>
<dbReference type="BioGRID" id="851987">
    <property type="interactions" value="1"/>
</dbReference>
<dbReference type="DIP" id="DIP-35752N"/>
<dbReference type="FunCoup" id="P0A9P6">
    <property type="interactions" value="721"/>
</dbReference>
<dbReference type="IntAct" id="P0A9P6">
    <property type="interactions" value="86"/>
</dbReference>
<dbReference type="STRING" id="511145.b3162"/>
<dbReference type="jPOST" id="P0A9P6"/>
<dbReference type="PaxDb" id="511145-b3162"/>
<dbReference type="EnsemblBacteria" id="AAC76196">
    <property type="protein sequence ID" value="AAC76196"/>
    <property type="gene ID" value="b3162"/>
</dbReference>
<dbReference type="GeneID" id="93778822"/>
<dbReference type="GeneID" id="947674"/>
<dbReference type="KEGG" id="ecj:JW5531"/>
<dbReference type="KEGG" id="eco:b3162"/>
<dbReference type="KEGG" id="ecoc:C3026_17225"/>
<dbReference type="PATRIC" id="fig|1411691.4.peg.3568"/>
<dbReference type="EchoBASE" id="EB0211"/>
<dbReference type="eggNOG" id="COG0513">
    <property type="taxonomic scope" value="Bacteria"/>
</dbReference>
<dbReference type="HOGENOM" id="CLU_003041_21_1_6"/>
<dbReference type="InParanoid" id="P0A9P6"/>
<dbReference type="OMA" id="LPQGMPK"/>
<dbReference type="OrthoDB" id="9805696at2"/>
<dbReference type="PhylomeDB" id="P0A9P6"/>
<dbReference type="BioCyc" id="EcoCyc:EG10215-MONOMER"/>
<dbReference type="BioCyc" id="MetaCyc:EG10215-MONOMER"/>
<dbReference type="BRENDA" id="3.6.4.13">
    <property type="organism ID" value="2026"/>
</dbReference>
<dbReference type="PRO" id="PR:P0A9P6"/>
<dbReference type="Proteomes" id="UP000000625">
    <property type="component" value="Chromosome"/>
</dbReference>
<dbReference type="GO" id="GO:0005829">
    <property type="term" value="C:cytosol"/>
    <property type="evidence" value="ECO:0000314"/>
    <property type="project" value="EcoCyc"/>
</dbReference>
<dbReference type="GO" id="GO:0005524">
    <property type="term" value="F:ATP binding"/>
    <property type="evidence" value="ECO:0007669"/>
    <property type="project" value="UniProtKB-UniRule"/>
</dbReference>
<dbReference type="GO" id="GO:0016887">
    <property type="term" value="F:ATP hydrolysis activity"/>
    <property type="evidence" value="ECO:0007669"/>
    <property type="project" value="RHEA"/>
</dbReference>
<dbReference type="GO" id="GO:0042803">
    <property type="term" value="F:protein homodimerization activity"/>
    <property type="evidence" value="ECO:0000314"/>
    <property type="project" value="EcoCyc"/>
</dbReference>
<dbReference type="GO" id="GO:0003724">
    <property type="term" value="F:RNA helicase activity"/>
    <property type="evidence" value="ECO:0000314"/>
    <property type="project" value="EcoCyc"/>
</dbReference>
<dbReference type="GO" id="GO:0033592">
    <property type="term" value="F:RNA strand annealing activity"/>
    <property type="evidence" value="ECO:0000314"/>
    <property type="project" value="EcoCyc"/>
</dbReference>
<dbReference type="GO" id="GO:0070417">
    <property type="term" value="P:cellular response to cold"/>
    <property type="evidence" value="ECO:0000315"/>
    <property type="project" value="EcoCyc"/>
</dbReference>
<dbReference type="GO" id="GO:0048255">
    <property type="term" value="P:mRNA stabilization"/>
    <property type="evidence" value="ECO:0000315"/>
    <property type="project" value="CACAO"/>
</dbReference>
<dbReference type="GO" id="GO:0045727">
    <property type="term" value="P:positive regulation of translation"/>
    <property type="evidence" value="ECO:0000315"/>
    <property type="project" value="EcoCyc"/>
</dbReference>
<dbReference type="GO" id="GO:0009409">
    <property type="term" value="P:response to cold"/>
    <property type="evidence" value="ECO:0000318"/>
    <property type="project" value="GO_Central"/>
</dbReference>
<dbReference type="GO" id="GO:0009314">
    <property type="term" value="P:response to radiation"/>
    <property type="evidence" value="ECO:0000315"/>
    <property type="project" value="EcoCyc"/>
</dbReference>
<dbReference type="GO" id="GO:0000027">
    <property type="term" value="P:ribosomal large subunit assembly"/>
    <property type="evidence" value="ECO:0000315"/>
    <property type="project" value="EcoCyc"/>
</dbReference>
<dbReference type="GO" id="GO:0006401">
    <property type="term" value="P:RNA catabolic process"/>
    <property type="evidence" value="ECO:0000316"/>
    <property type="project" value="EcoCyc"/>
</dbReference>
<dbReference type="CDD" id="cd00268">
    <property type="entry name" value="DEADc"/>
    <property type="match status" value="1"/>
</dbReference>
<dbReference type="CDD" id="cd12499">
    <property type="entry name" value="RRM_EcCsdA_like"/>
    <property type="match status" value="1"/>
</dbReference>
<dbReference type="CDD" id="cd18787">
    <property type="entry name" value="SF2_C_DEAD"/>
    <property type="match status" value="1"/>
</dbReference>
<dbReference type="FunFam" id="3.30.70.330:FF:000068">
    <property type="entry name" value="ATP-dependent RNA helicase DeaD"/>
    <property type="match status" value="1"/>
</dbReference>
<dbReference type="FunFam" id="3.40.50.300:FF:000374">
    <property type="entry name" value="ATP-dependent RNA helicase DeaD"/>
    <property type="match status" value="1"/>
</dbReference>
<dbReference type="FunFam" id="3.40.50.300:FF:000108">
    <property type="entry name" value="ATP-dependent RNA helicase RhlE"/>
    <property type="match status" value="1"/>
</dbReference>
<dbReference type="Gene3D" id="3.30.70.330">
    <property type="match status" value="1"/>
</dbReference>
<dbReference type="Gene3D" id="3.40.50.300">
    <property type="entry name" value="P-loop containing nucleotide triphosphate hydrolases"/>
    <property type="match status" value="2"/>
</dbReference>
<dbReference type="HAMAP" id="MF_00964">
    <property type="entry name" value="DEAD_helicase_DeaD"/>
    <property type="match status" value="1"/>
</dbReference>
<dbReference type="InterPro" id="IPR021046">
    <property type="entry name" value="Cold-shock_DEAD_Abox_C"/>
</dbReference>
<dbReference type="InterPro" id="IPR034415">
    <property type="entry name" value="CsdA_RRM"/>
</dbReference>
<dbReference type="InterPro" id="IPR005580">
    <property type="entry name" value="DbpA/CsdA_RNA-bd_dom"/>
</dbReference>
<dbReference type="InterPro" id="IPR011545">
    <property type="entry name" value="DEAD/DEAH_box_helicase_dom"/>
</dbReference>
<dbReference type="InterPro" id="IPR050547">
    <property type="entry name" value="DEAD_box_RNA_helicases"/>
</dbReference>
<dbReference type="InterPro" id="IPR028618">
    <property type="entry name" value="DEAD_helicase_DeaD"/>
</dbReference>
<dbReference type="InterPro" id="IPR014001">
    <property type="entry name" value="Helicase_ATP-bd"/>
</dbReference>
<dbReference type="InterPro" id="IPR001650">
    <property type="entry name" value="Helicase_C-like"/>
</dbReference>
<dbReference type="InterPro" id="IPR012677">
    <property type="entry name" value="Nucleotide-bd_a/b_plait_sf"/>
</dbReference>
<dbReference type="InterPro" id="IPR027417">
    <property type="entry name" value="P-loop_NTPase"/>
</dbReference>
<dbReference type="InterPro" id="IPR000629">
    <property type="entry name" value="RNA-helicase_DEAD-box_CS"/>
</dbReference>
<dbReference type="InterPro" id="IPR014014">
    <property type="entry name" value="RNA_helicase_DEAD_Q_motif"/>
</dbReference>
<dbReference type="NCBIfam" id="NF008642">
    <property type="entry name" value="PRK11634.1"/>
    <property type="match status" value="1"/>
</dbReference>
<dbReference type="PANTHER" id="PTHR47963:SF8">
    <property type="entry name" value="ATP-DEPENDENT RNA HELICASE DEAD"/>
    <property type="match status" value="1"/>
</dbReference>
<dbReference type="PANTHER" id="PTHR47963">
    <property type="entry name" value="DEAD-BOX ATP-DEPENDENT RNA HELICASE 47, MITOCHONDRIAL"/>
    <property type="match status" value="1"/>
</dbReference>
<dbReference type="Pfam" id="PF03880">
    <property type="entry name" value="DbpA"/>
    <property type="match status" value="1"/>
</dbReference>
<dbReference type="Pfam" id="PF00270">
    <property type="entry name" value="DEAD"/>
    <property type="match status" value="1"/>
</dbReference>
<dbReference type="Pfam" id="PF12343">
    <property type="entry name" value="DeaD_C"/>
    <property type="match status" value="1"/>
</dbReference>
<dbReference type="Pfam" id="PF25399">
    <property type="entry name" value="DeaD_dimer"/>
    <property type="match status" value="1"/>
</dbReference>
<dbReference type="Pfam" id="PF00271">
    <property type="entry name" value="Helicase_C"/>
    <property type="match status" value="1"/>
</dbReference>
<dbReference type="SMART" id="SM00487">
    <property type="entry name" value="DEXDc"/>
    <property type="match status" value="1"/>
</dbReference>
<dbReference type="SMART" id="SM00490">
    <property type="entry name" value="HELICc"/>
    <property type="match status" value="1"/>
</dbReference>
<dbReference type="SUPFAM" id="SSF52540">
    <property type="entry name" value="P-loop containing nucleoside triphosphate hydrolases"/>
    <property type="match status" value="1"/>
</dbReference>
<dbReference type="PROSITE" id="PS00039">
    <property type="entry name" value="DEAD_ATP_HELICASE"/>
    <property type="match status" value="1"/>
</dbReference>
<dbReference type="PROSITE" id="PS51192">
    <property type="entry name" value="HELICASE_ATP_BIND_1"/>
    <property type="match status" value="1"/>
</dbReference>
<dbReference type="PROSITE" id="PS51194">
    <property type="entry name" value="HELICASE_CTER"/>
    <property type="match status" value="1"/>
</dbReference>
<dbReference type="PROSITE" id="PS51195">
    <property type="entry name" value="Q_MOTIF"/>
    <property type="match status" value="1"/>
</dbReference>